<name>VF199_ASFB7</name>
<reference key="1">
    <citation type="journal article" date="1995" name="Virology">
        <title>Analysis of the complete nucleotide sequence of African swine fever virus.</title>
        <authorList>
            <person name="Yanez R.J."/>
            <person name="Rodriguez J.M."/>
            <person name="Nogal M.L."/>
            <person name="Yuste L."/>
            <person name="Enriquez C."/>
            <person name="Rodriguez J.F."/>
            <person name="Vinuela E."/>
        </authorList>
    </citation>
    <scope>NUCLEOTIDE SEQUENCE [LARGE SCALE GENOMIC DNA]</scope>
</reference>
<reference key="2">
    <citation type="journal article" date="2018" name="J. Virol.">
        <title>A Proteomic Atlas of the African Swine Fever Virus Particle.</title>
        <authorList>
            <person name="Alejo A."/>
            <person name="Matamoros T."/>
            <person name="Guerra M."/>
            <person name="Andres G."/>
        </authorList>
    </citation>
    <scope>SUBCELLULAR LOCATION</scope>
</reference>
<reference key="3">
    <citation type="journal article" date="2020" name="J. Virol.">
        <title>The African Swine Fever Virus Transcriptome.</title>
        <authorList>
            <person name="Cackett G."/>
            <person name="Matelska D."/>
            <person name="Sykora M."/>
            <person name="Portugal R."/>
            <person name="Malecki M."/>
            <person name="Baehler J."/>
            <person name="Dixon L."/>
            <person name="Werner F."/>
        </authorList>
    </citation>
    <scope>INDUCTION</scope>
</reference>
<reference key="4">
    <citation type="journal article" date="2020" name="MBio">
        <title>African Swine Fever Virus Protein pE199L Mediates Virus Entry by Enabling Membrane Fusion and Core Penetration.</title>
        <authorList>
            <person name="Matamoros T."/>
            <person name="Alejo A."/>
            <person name="Rodriguez J.M."/>
            <person name="Hernaez B."/>
            <person name="Guerra M."/>
            <person name="Fraile-Ramos A."/>
            <person name="Andres G."/>
        </authorList>
    </citation>
    <scope>FUNCTION</scope>
    <scope>SUBCELLULAR LOCATION</scope>
    <scope>DISULFIDE BOND</scope>
</reference>
<reference key="5">
    <citation type="journal article" date="2021" name="Virol. Sin.">
        <title>African Swine Fever Virus Protein E199L Promotes Cell Autophagy through the Interaction of PYCR2.</title>
        <authorList>
            <person name="Chen S."/>
            <person name="Zhang X."/>
            <person name="Nie Y."/>
            <person name="Li H."/>
            <person name="Chen W."/>
            <person name="Lin W."/>
            <person name="Chen F."/>
            <person name="Xie Q."/>
        </authorList>
    </citation>
    <scope>FUNCTION</scope>
    <scope>INTERACTION WITH HOST PYCR2</scope>
</reference>
<accession>Q65198</accession>
<dbReference type="EMBL" id="U18466">
    <property type="protein sequence ID" value="AAA65358.1"/>
    <property type="molecule type" value="Genomic_DNA"/>
</dbReference>
<dbReference type="RefSeq" id="NP_042822.1">
    <property type="nucleotide sequence ID" value="NC_001659.2"/>
</dbReference>
<dbReference type="SMR" id="Q65198"/>
<dbReference type="GeneID" id="22220358"/>
<dbReference type="KEGG" id="vg:22220358"/>
<dbReference type="Proteomes" id="UP000000624">
    <property type="component" value="Segment"/>
</dbReference>
<dbReference type="GO" id="GO:0033644">
    <property type="term" value="C:host cell membrane"/>
    <property type="evidence" value="ECO:0007669"/>
    <property type="project" value="UniProtKB-SubCell"/>
</dbReference>
<dbReference type="GO" id="GO:0016020">
    <property type="term" value="C:membrane"/>
    <property type="evidence" value="ECO:0007669"/>
    <property type="project" value="UniProtKB-KW"/>
</dbReference>
<dbReference type="GO" id="GO:0055036">
    <property type="term" value="C:virion membrane"/>
    <property type="evidence" value="ECO:0007669"/>
    <property type="project" value="UniProtKB-SubCell"/>
</dbReference>
<dbReference type="GO" id="GO:0039520">
    <property type="term" value="P:symbiont-mediated activation of host autophagy"/>
    <property type="evidence" value="ECO:0007669"/>
    <property type="project" value="UniProtKB-KW"/>
</dbReference>
<comment type="function">
    <text evidence="3 4">Essential for viral fusion with host endosomal membrane and core release (PubMed:32788374). Not required for virus morphogenesis and egress (PubMed:32788374). Induces complete autophagy through the interaction with and down-regulation of host PYCR2 (PubMed:33830435).</text>
</comment>
<comment type="subunit">
    <text evidence="4">Interacts with host PYCR2; this interaction results in autophagy activation.</text>
</comment>
<comment type="subcellular location">
    <subcellularLocation>
        <location evidence="3 6">Virion membrane</location>
    </subcellularLocation>
    <subcellularLocation>
        <location evidence="5">Host membrane</location>
        <topology evidence="3">Single-pass membrane protein</topology>
    </subcellularLocation>
    <text evidence="3">Found in the perinuclear cytoplasmic viral factories during assembly (PubMed:32788374). Part of the virion inner membrane (PubMed:32788374).</text>
</comment>
<comment type="induction">
    <text evidence="2">Expressed in the late phase of the viral replicative cycle.</text>
</comment>
<comment type="PTM">
    <text evidence="3">Contains intramolecular disulfide bonds.</text>
</comment>
<comment type="similarity">
    <text evidence="5">Belongs to the asfivirus E199L family.</text>
</comment>
<gene>
    <name type="ordered locus">Ba71V-130</name>
    <name type="ORF">E199L</name>
</gene>
<organismHost>
    <name type="scientific">Ornithodoros</name>
    <name type="common">relapsing fever ticks</name>
    <dbReference type="NCBI Taxonomy" id="6937"/>
</organismHost>
<organismHost>
    <name type="scientific">Sus scrofa</name>
    <name type="common">Pig</name>
    <dbReference type="NCBI Taxonomy" id="9823"/>
</organismHost>
<proteinExistence type="evidence at protein level"/>
<sequence>MSCMPVSTKCNDIWVDFSCTGPSISELQKKEPKAWAAILRSHTNQQTAEDDNIIGSICDKQGLCSKDEYAYSQYCACVNSGTLWAECAFAPCNGNKNAYKTTEHRNILTNKQCPSGLTICQNIAEYGGSGNISDLYQNFNCNSVINTFLINVMNHPFLTLILIILILIIIYRLMPSSGGKHNDDKLPPPSLIFSNLNNF</sequence>
<organism>
    <name type="scientific">African swine fever virus (strain Badajoz 1971 Vero-adapted)</name>
    <name type="common">Ba71V</name>
    <name type="synonym">ASFV</name>
    <dbReference type="NCBI Taxonomy" id="10498"/>
    <lineage>
        <taxon>Viruses</taxon>
        <taxon>Varidnaviria</taxon>
        <taxon>Bamfordvirae</taxon>
        <taxon>Nucleocytoviricota</taxon>
        <taxon>Pokkesviricetes</taxon>
        <taxon>Asfuvirales</taxon>
        <taxon>Asfarviridae</taxon>
        <taxon>Asfivirus</taxon>
        <taxon>African swine fever virus</taxon>
    </lineage>
</organism>
<protein>
    <recommendedName>
        <fullName evidence="5">Inner membrane protein E199L</fullName>
        <shortName>pE199L</shortName>
    </recommendedName>
</protein>
<keyword id="KW-1072">Activation of host autophagy by virus</keyword>
<keyword id="KW-1015">Disulfide bond</keyword>
<keyword id="KW-1043">Host membrane</keyword>
<keyword id="KW-0945">Host-virus interaction</keyword>
<keyword id="KW-0426">Late protein</keyword>
<keyword id="KW-0472">Membrane</keyword>
<keyword id="KW-1185">Reference proteome</keyword>
<keyword id="KW-0812">Transmembrane</keyword>
<keyword id="KW-1133">Transmembrane helix</keyword>
<keyword id="KW-0946">Virion</keyword>
<evidence type="ECO:0000255" key="1"/>
<evidence type="ECO:0000269" key="2">
    <source>
    </source>
</evidence>
<evidence type="ECO:0000269" key="3">
    <source>
    </source>
</evidence>
<evidence type="ECO:0000269" key="4">
    <source>
    </source>
</evidence>
<evidence type="ECO:0000305" key="5"/>
<evidence type="ECO:0000305" key="6">
    <source>
    </source>
</evidence>
<feature type="chain" id="PRO_0000373581" description="Inner membrane protein E199L">
    <location>
        <begin position="1"/>
        <end position="199"/>
    </location>
</feature>
<feature type="transmembrane region" description="Helical" evidence="1">
    <location>
        <begin position="150"/>
        <end position="170"/>
    </location>
</feature>